<name>NIFH2_AZOC5</name>
<organism>
    <name type="scientific">Azorhizobium caulinodans (strain ATCC 43989 / DSM 5975 / JCM 20966 / LMG 6465 / NBRC 14845 / NCIMB 13405 / ORS 571)</name>
    <dbReference type="NCBI Taxonomy" id="438753"/>
    <lineage>
        <taxon>Bacteria</taxon>
        <taxon>Pseudomonadati</taxon>
        <taxon>Pseudomonadota</taxon>
        <taxon>Alphaproteobacteria</taxon>
        <taxon>Hyphomicrobiales</taxon>
        <taxon>Xanthobacteraceae</taxon>
        <taxon>Azorhizobium</taxon>
    </lineage>
</organism>
<comment type="function">
    <text evidence="1">The key enzymatic reactions in nitrogen fixation are catalyzed by the nitrogenase complex, which has 2 components: the iron protein and the molybdenum-iron protein.</text>
</comment>
<comment type="catalytic activity">
    <reaction>
        <text>N2 + 8 reduced [2Fe-2S]-[ferredoxin] + 16 ATP + 16 H2O = H2 + 8 oxidized [2Fe-2S]-[ferredoxin] + 2 NH4(+) + 16 ADP + 16 phosphate + 6 H(+)</text>
        <dbReference type="Rhea" id="RHEA:21448"/>
        <dbReference type="Rhea" id="RHEA-COMP:10000"/>
        <dbReference type="Rhea" id="RHEA-COMP:10001"/>
        <dbReference type="ChEBI" id="CHEBI:15377"/>
        <dbReference type="ChEBI" id="CHEBI:15378"/>
        <dbReference type="ChEBI" id="CHEBI:17997"/>
        <dbReference type="ChEBI" id="CHEBI:18276"/>
        <dbReference type="ChEBI" id="CHEBI:28938"/>
        <dbReference type="ChEBI" id="CHEBI:30616"/>
        <dbReference type="ChEBI" id="CHEBI:33737"/>
        <dbReference type="ChEBI" id="CHEBI:33738"/>
        <dbReference type="ChEBI" id="CHEBI:43474"/>
        <dbReference type="ChEBI" id="CHEBI:456216"/>
        <dbReference type="EC" id="1.18.6.1"/>
    </reaction>
</comment>
<comment type="cofactor">
    <cofactor evidence="1">
        <name>[4Fe-4S] cluster</name>
        <dbReference type="ChEBI" id="CHEBI:49883"/>
    </cofactor>
    <text evidence="1">Binds 1 [4Fe-4S] cluster per dimer.</text>
</comment>
<comment type="subunit">
    <text evidence="1">Homodimer.</text>
</comment>
<comment type="PTM">
    <text evidence="1">The reversible ADP-ribosylation of Arg-102 inactivates the nitrogenase reductase and regulates nitrogenase activity.</text>
</comment>
<comment type="similarity">
    <text evidence="3">Belongs to the NifH/BchL/ChlL family.</text>
</comment>
<gene>
    <name type="primary">nifH2</name>
    <name type="ordered locus">AZC_1041</name>
</gene>
<proteinExistence type="inferred from homology"/>
<reference key="1">
    <citation type="journal article" date="1987" name="J. Gen. Microbiol.">
        <title>Nucleotide sequence and functional analysis of the two nifH copies of Rhizobium ORS571.</title>
        <authorList>
            <person name="Norel F."/>
            <person name="Elmerich C."/>
        </authorList>
    </citation>
    <scope>NUCLEOTIDE SEQUENCE [GENOMIC DNA]</scope>
</reference>
<reference key="2">
    <citation type="submission" date="2007-04" db="EMBL/GenBank/DDBJ databases">
        <title>Complete genome sequence of the nitrogen-fixing bacterium Azorhizobium caulinodans ORS571.</title>
        <authorList>
            <person name="Lee K.B."/>
            <person name="Backer P.D."/>
            <person name="Aono T."/>
            <person name="Liu C.T."/>
            <person name="Suzuki S."/>
            <person name="Suzuki T."/>
            <person name="Kaneko T."/>
            <person name="Yamada M."/>
            <person name="Tabata S."/>
            <person name="Kupfer D.M."/>
            <person name="Najar F.Z."/>
            <person name="Wiley G.B."/>
            <person name="Roe B."/>
            <person name="Binnewies T."/>
            <person name="Ussery D."/>
            <person name="Vereecke D."/>
            <person name="Gevers D."/>
            <person name="Holsters M."/>
            <person name="Oyaizu H."/>
        </authorList>
    </citation>
    <scope>NUCLEOTIDE SEQUENCE [LARGE SCALE GENOMIC DNA]</scope>
    <source>
        <strain>ATCC 43989 / DSM 5975 / JCM 20966 / LMG 6465 / NBRC 14845 / NCIMB 13405 / ORS 571</strain>
    </source>
</reference>
<feature type="chain" id="PRO_0000139487" description="Nitrogenase iron protein 2">
    <location>
        <begin position="1"/>
        <end position="296"/>
    </location>
</feature>
<feature type="binding site" evidence="2">
    <location>
        <begin position="11"/>
        <end position="18"/>
    </location>
    <ligand>
        <name>ATP</name>
        <dbReference type="ChEBI" id="CHEBI:30616"/>
    </ligand>
</feature>
<feature type="binding site" evidence="1">
    <location>
        <position position="99"/>
    </location>
    <ligand>
        <name>[4Fe-4S] cluster</name>
        <dbReference type="ChEBI" id="CHEBI:49883"/>
        <note>ligand shared between dimeric partners</note>
    </ligand>
</feature>
<feature type="binding site" evidence="1">
    <location>
        <position position="133"/>
    </location>
    <ligand>
        <name>[4Fe-4S] cluster</name>
        <dbReference type="ChEBI" id="CHEBI:49883"/>
        <note>ligand shared between dimeric partners</note>
    </ligand>
</feature>
<feature type="modified residue" description="ADP-ribosylarginine; by dinitrogenase reductase ADP-ribosyltransferase" evidence="1">
    <location>
        <position position="102"/>
    </location>
</feature>
<protein>
    <recommendedName>
        <fullName>Nitrogenase iron protein 2</fullName>
        <ecNumber>1.18.6.1</ecNumber>
    </recommendedName>
    <alternativeName>
        <fullName>Nitrogenase Fe protein 2</fullName>
    </alternativeName>
    <alternativeName>
        <fullName>Nitrogenase component II</fullName>
    </alternativeName>
    <alternativeName>
        <fullName>Nitrogenase reductase</fullName>
    </alternativeName>
</protein>
<sequence length="296" mass="31988">MSSLRQIAFYGKGGIGKSTTSQNTLAALAEMGHRILIVGCDPKADSTRLILHAKAQDTILSLAAAAGSVEDLELEEVMKIGYRDIRCVESGGPEPGVGCAGRGVITSINFLEENGAYEDIDYVSYDVLGDVVCGGFAMPIRENKAQEIYIVMSGEMMAMYAANNISKGILKYANSGGVRLGGLVCNERQTDKELELAENLAKKLGTQLIYFVPRDNIVQHAELRRMTVIEYAPDSVQANHYRNLAERVHNNGGKGIIPTPITMDELEDMLMEHGIMKTVDESQVGKTAAELAALSA</sequence>
<evidence type="ECO:0000250" key="1"/>
<evidence type="ECO:0000255" key="2"/>
<evidence type="ECO:0000305" key="3"/>
<accession>P26252</accession>
<accession>A8HQJ7</accession>
<dbReference type="EC" id="1.18.6.1"/>
<dbReference type="EMBL" id="M16710">
    <property type="protein sequence ID" value="AAA88521.1"/>
    <property type="molecule type" value="Genomic_DNA"/>
</dbReference>
<dbReference type="EMBL" id="AP009384">
    <property type="protein sequence ID" value="BAF87039.1"/>
    <property type="molecule type" value="Genomic_DNA"/>
</dbReference>
<dbReference type="PIR" id="A47622">
    <property type="entry name" value="A47622"/>
</dbReference>
<dbReference type="RefSeq" id="WP_012169572.1">
    <property type="nucleotide sequence ID" value="NC_009937.1"/>
</dbReference>
<dbReference type="SMR" id="P26252"/>
<dbReference type="STRING" id="438753.AZC_1041"/>
<dbReference type="KEGG" id="azc:AZC_1041"/>
<dbReference type="eggNOG" id="COG1348">
    <property type="taxonomic scope" value="Bacteria"/>
</dbReference>
<dbReference type="HOGENOM" id="CLU_059373_0_0_5"/>
<dbReference type="Proteomes" id="UP000000270">
    <property type="component" value="Chromosome"/>
</dbReference>
<dbReference type="GO" id="GO:0051539">
    <property type="term" value="F:4 iron, 4 sulfur cluster binding"/>
    <property type="evidence" value="ECO:0007669"/>
    <property type="project" value="UniProtKB-KW"/>
</dbReference>
<dbReference type="GO" id="GO:0005524">
    <property type="term" value="F:ATP binding"/>
    <property type="evidence" value="ECO:0007669"/>
    <property type="project" value="UniProtKB-UniRule"/>
</dbReference>
<dbReference type="GO" id="GO:0046872">
    <property type="term" value="F:metal ion binding"/>
    <property type="evidence" value="ECO:0007669"/>
    <property type="project" value="UniProtKB-KW"/>
</dbReference>
<dbReference type="GO" id="GO:0016163">
    <property type="term" value="F:nitrogenase activity"/>
    <property type="evidence" value="ECO:0007669"/>
    <property type="project" value="UniProtKB-UniRule"/>
</dbReference>
<dbReference type="GO" id="GO:0009399">
    <property type="term" value="P:nitrogen fixation"/>
    <property type="evidence" value="ECO:0007669"/>
    <property type="project" value="UniProtKB-UniRule"/>
</dbReference>
<dbReference type="CDD" id="cd02040">
    <property type="entry name" value="NifH"/>
    <property type="match status" value="1"/>
</dbReference>
<dbReference type="FunFam" id="3.40.50.300:FF:001379">
    <property type="entry name" value="Nitrogenase iron protein 1"/>
    <property type="match status" value="1"/>
</dbReference>
<dbReference type="Gene3D" id="3.40.50.300">
    <property type="entry name" value="P-loop containing nucleotide triphosphate hydrolases"/>
    <property type="match status" value="1"/>
</dbReference>
<dbReference type="HAMAP" id="MF_00533">
    <property type="entry name" value="NifH"/>
    <property type="match status" value="1"/>
</dbReference>
<dbReference type="InterPro" id="IPR030655">
    <property type="entry name" value="NifH/chlL_CS"/>
</dbReference>
<dbReference type="InterPro" id="IPR000392">
    <property type="entry name" value="NifH/frxC"/>
</dbReference>
<dbReference type="InterPro" id="IPR005977">
    <property type="entry name" value="Nitrogenase_Fe_NifH"/>
</dbReference>
<dbReference type="InterPro" id="IPR027417">
    <property type="entry name" value="P-loop_NTPase"/>
</dbReference>
<dbReference type="NCBIfam" id="TIGR01287">
    <property type="entry name" value="nifH"/>
    <property type="match status" value="1"/>
</dbReference>
<dbReference type="PANTHER" id="PTHR42864">
    <property type="entry name" value="LIGHT-INDEPENDENT PROTOCHLOROPHYLLIDE REDUCTASE IRON-SULFUR ATP-BINDING PROTEIN"/>
    <property type="match status" value="1"/>
</dbReference>
<dbReference type="PANTHER" id="PTHR42864:SF2">
    <property type="entry name" value="LIGHT-INDEPENDENT PROTOCHLOROPHYLLIDE REDUCTASE IRON-SULFUR ATP-BINDING PROTEIN"/>
    <property type="match status" value="1"/>
</dbReference>
<dbReference type="Pfam" id="PF00142">
    <property type="entry name" value="Fer4_NifH"/>
    <property type="match status" value="1"/>
</dbReference>
<dbReference type="PIRSF" id="PIRSF000363">
    <property type="entry name" value="Nitrogenase_iron"/>
    <property type="match status" value="1"/>
</dbReference>
<dbReference type="PRINTS" id="PR00091">
    <property type="entry name" value="NITROGNASEII"/>
</dbReference>
<dbReference type="SUPFAM" id="SSF52540">
    <property type="entry name" value="P-loop containing nucleoside triphosphate hydrolases"/>
    <property type="match status" value="1"/>
</dbReference>
<dbReference type="PROSITE" id="PS00746">
    <property type="entry name" value="NIFH_FRXC_1"/>
    <property type="match status" value="1"/>
</dbReference>
<dbReference type="PROSITE" id="PS00692">
    <property type="entry name" value="NIFH_FRXC_2"/>
    <property type="match status" value="1"/>
</dbReference>
<dbReference type="PROSITE" id="PS51026">
    <property type="entry name" value="NIFH_FRXC_3"/>
    <property type="match status" value="1"/>
</dbReference>
<keyword id="KW-0004">4Fe-4S</keyword>
<keyword id="KW-0013">ADP-ribosylation</keyword>
<keyword id="KW-0067">ATP-binding</keyword>
<keyword id="KW-0408">Iron</keyword>
<keyword id="KW-0411">Iron-sulfur</keyword>
<keyword id="KW-0479">Metal-binding</keyword>
<keyword id="KW-0535">Nitrogen fixation</keyword>
<keyword id="KW-0547">Nucleotide-binding</keyword>
<keyword id="KW-0560">Oxidoreductase</keyword>
<keyword id="KW-1185">Reference proteome</keyword>